<evidence type="ECO:0000255" key="1">
    <source>
        <dbReference type="HAMAP-Rule" id="MF_00195"/>
    </source>
</evidence>
<evidence type="ECO:0000305" key="2"/>
<keyword id="KW-0342">GTP-binding</keyword>
<keyword id="KW-0547">Nucleotide-binding</keyword>
<keyword id="KW-0677">Repeat</keyword>
<keyword id="KW-0690">Ribosome biogenesis</keyword>
<dbReference type="EMBL" id="CP000975">
    <property type="protein sequence ID" value="ACD82236.1"/>
    <property type="status" value="ALT_INIT"/>
    <property type="molecule type" value="Genomic_DNA"/>
</dbReference>
<dbReference type="RefSeq" id="WP_048810003.1">
    <property type="nucleotide sequence ID" value="NC_010794.1"/>
</dbReference>
<dbReference type="SMR" id="B3DXK2"/>
<dbReference type="STRING" id="481448.Minf_0176"/>
<dbReference type="KEGG" id="min:Minf_0176"/>
<dbReference type="eggNOG" id="COG1160">
    <property type="taxonomic scope" value="Bacteria"/>
</dbReference>
<dbReference type="HOGENOM" id="CLU_016077_6_2_0"/>
<dbReference type="OrthoDB" id="9805918at2"/>
<dbReference type="Proteomes" id="UP000009149">
    <property type="component" value="Chromosome"/>
</dbReference>
<dbReference type="GO" id="GO:0005525">
    <property type="term" value="F:GTP binding"/>
    <property type="evidence" value="ECO:0007669"/>
    <property type="project" value="UniProtKB-UniRule"/>
</dbReference>
<dbReference type="GO" id="GO:0043022">
    <property type="term" value="F:ribosome binding"/>
    <property type="evidence" value="ECO:0007669"/>
    <property type="project" value="TreeGrafter"/>
</dbReference>
<dbReference type="GO" id="GO:0042254">
    <property type="term" value="P:ribosome biogenesis"/>
    <property type="evidence" value="ECO:0007669"/>
    <property type="project" value="UniProtKB-KW"/>
</dbReference>
<dbReference type="CDD" id="cd01894">
    <property type="entry name" value="EngA1"/>
    <property type="match status" value="1"/>
</dbReference>
<dbReference type="CDD" id="cd01895">
    <property type="entry name" value="EngA2"/>
    <property type="match status" value="1"/>
</dbReference>
<dbReference type="Gene3D" id="3.30.300.20">
    <property type="match status" value="1"/>
</dbReference>
<dbReference type="Gene3D" id="3.40.50.300">
    <property type="entry name" value="P-loop containing nucleotide triphosphate hydrolases"/>
    <property type="match status" value="2"/>
</dbReference>
<dbReference type="HAMAP" id="MF_00195">
    <property type="entry name" value="GTPase_Der"/>
    <property type="match status" value="1"/>
</dbReference>
<dbReference type="InterPro" id="IPR031166">
    <property type="entry name" value="G_ENGA"/>
</dbReference>
<dbReference type="InterPro" id="IPR006073">
    <property type="entry name" value="GTP-bd"/>
</dbReference>
<dbReference type="InterPro" id="IPR016484">
    <property type="entry name" value="GTPase_Der"/>
</dbReference>
<dbReference type="InterPro" id="IPR032859">
    <property type="entry name" value="KH_dom-like"/>
</dbReference>
<dbReference type="InterPro" id="IPR015946">
    <property type="entry name" value="KH_dom-like_a/b"/>
</dbReference>
<dbReference type="InterPro" id="IPR027417">
    <property type="entry name" value="P-loop_NTPase"/>
</dbReference>
<dbReference type="InterPro" id="IPR005225">
    <property type="entry name" value="Small_GTP-bd"/>
</dbReference>
<dbReference type="NCBIfam" id="TIGR03594">
    <property type="entry name" value="GTPase_EngA"/>
    <property type="match status" value="1"/>
</dbReference>
<dbReference type="NCBIfam" id="TIGR00231">
    <property type="entry name" value="small_GTP"/>
    <property type="match status" value="2"/>
</dbReference>
<dbReference type="PANTHER" id="PTHR43834">
    <property type="entry name" value="GTPASE DER"/>
    <property type="match status" value="1"/>
</dbReference>
<dbReference type="PANTHER" id="PTHR43834:SF6">
    <property type="entry name" value="GTPASE DER"/>
    <property type="match status" value="1"/>
</dbReference>
<dbReference type="Pfam" id="PF14714">
    <property type="entry name" value="KH_dom-like"/>
    <property type="match status" value="1"/>
</dbReference>
<dbReference type="Pfam" id="PF01926">
    <property type="entry name" value="MMR_HSR1"/>
    <property type="match status" value="2"/>
</dbReference>
<dbReference type="PIRSF" id="PIRSF006485">
    <property type="entry name" value="GTP-binding_EngA"/>
    <property type="match status" value="1"/>
</dbReference>
<dbReference type="PRINTS" id="PR00326">
    <property type="entry name" value="GTP1OBG"/>
</dbReference>
<dbReference type="SUPFAM" id="SSF52540">
    <property type="entry name" value="P-loop containing nucleoside triphosphate hydrolases"/>
    <property type="match status" value="2"/>
</dbReference>
<dbReference type="SUPFAM" id="SSF82653">
    <property type="entry name" value="Probable GTPase Der, C-terminal domain"/>
    <property type="match status" value="1"/>
</dbReference>
<dbReference type="PROSITE" id="PS51712">
    <property type="entry name" value="G_ENGA"/>
    <property type="match status" value="2"/>
</dbReference>
<sequence>MKTIAIVGRPNVGKSLLFNRLCGKEISLVYDQPGVTRDRIVCCIKKEGKEIVLVDTGGLVFDCQTDLAKSLFDQISMAVEEAHHILFVVDGRTGLLPLDKQIAKFLREKHKAVTVVVNKLDHPGMEHFCAEFANLGFEEIFAVSAAHNLGINQLLEKIFSLGAEERENPIFAPSTRIAVIGQPNAGKSSLINSLIGESRLVVHEEPGTTHDAVEVGIEVCGVPFTFIDTAGLKKKNKLQEGLEIKVSGRTVHSINRSHLVWFIIDGQKGITLQDKKIGGLIQKAFKPCMVILNKIDLLEDRLNLKEGNKKGMLYVQEQLPFLSYAPVVVVSAEKKWNFKTLLSTLLRVDQERKKRIPTHRLTQFFQETLNQYPPPQVQGKRLKIYYATQIYDKEGSGGSPCPTFILFVNNPNCIKETYQKFLEKQFRQAFCFRGCPLLWKWRKAEGKGESSLHQDVILSR</sequence>
<protein>
    <recommendedName>
        <fullName evidence="1">GTPase Der</fullName>
    </recommendedName>
    <alternativeName>
        <fullName evidence="1">GTP-binding protein EngA</fullName>
    </alternativeName>
</protein>
<comment type="function">
    <text evidence="1">GTPase that plays an essential role in the late steps of ribosome biogenesis.</text>
</comment>
<comment type="subunit">
    <text evidence="1">Associates with the 50S ribosomal subunit.</text>
</comment>
<comment type="similarity">
    <text evidence="1">Belongs to the TRAFAC class TrmE-Era-EngA-EngB-Septin-like GTPase superfamily. EngA (Der) GTPase family.</text>
</comment>
<comment type="sequence caution" evidence="2">
    <conflict type="erroneous initiation">
        <sequence resource="EMBL-CDS" id="ACD82236"/>
    </conflict>
    <text>Truncated N-terminus.</text>
</comment>
<organism>
    <name type="scientific">Methylacidiphilum infernorum (isolate V4)</name>
    <name type="common">Methylokorus infernorum (strain V4)</name>
    <dbReference type="NCBI Taxonomy" id="481448"/>
    <lineage>
        <taxon>Bacteria</taxon>
        <taxon>Pseudomonadati</taxon>
        <taxon>Verrucomicrobiota</taxon>
        <taxon>Methylacidiphilae</taxon>
        <taxon>Methylacidiphilales</taxon>
        <taxon>Methylacidiphilaceae</taxon>
        <taxon>Methylacidiphilum (ex Ratnadevi et al. 2023)</taxon>
    </lineage>
</organism>
<name>DER_METI4</name>
<feature type="chain" id="PRO_0000403186" description="GTPase Der">
    <location>
        <begin position="1"/>
        <end position="460"/>
    </location>
</feature>
<feature type="domain" description="EngA-type G 1">
    <location>
        <begin position="2"/>
        <end position="166"/>
    </location>
</feature>
<feature type="domain" description="EngA-type G 2">
    <location>
        <begin position="175"/>
        <end position="353"/>
    </location>
</feature>
<feature type="domain" description="KH-like" evidence="1">
    <location>
        <begin position="354"/>
        <end position="446"/>
    </location>
</feature>
<feature type="binding site" evidence="1">
    <location>
        <begin position="8"/>
        <end position="15"/>
    </location>
    <ligand>
        <name>GTP</name>
        <dbReference type="ChEBI" id="CHEBI:37565"/>
        <label>1</label>
    </ligand>
</feature>
<feature type="binding site" evidence="1">
    <location>
        <begin position="55"/>
        <end position="59"/>
    </location>
    <ligand>
        <name>GTP</name>
        <dbReference type="ChEBI" id="CHEBI:37565"/>
        <label>1</label>
    </ligand>
</feature>
<feature type="binding site" evidence="1">
    <location>
        <begin position="118"/>
        <end position="121"/>
    </location>
    <ligand>
        <name>GTP</name>
        <dbReference type="ChEBI" id="CHEBI:37565"/>
        <label>1</label>
    </ligand>
</feature>
<feature type="binding site" evidence="1">
    <location>
        <begin position="181"/>
        <end position="188"/>
    </location>
    <ligand>
        <name>GTP</name>
        <dbReference type="ChEBI" id="CHEBI:37565"/>
        <label>2</label>
    </ligand>
</feature>
<feature type="binding site" evidence="1">
    <location>
        <begin position="228"/>
        <end position="232"/>
    </location>
    <ligand>
        <name>GTP</name>
        <dbReference type="ChEBI" id="CHEBI:37565"/>
        <label>2</label>
    </ligand>
</feature>
<feature type="binding site" evidence="1">
    <location>
        <begin position="293"/>
        <end position="296"/>
    </location>
    <ligand>
        <name>GTP</name>
        <dbReference type="ChEBI" id="CHEBI:37565"/>
        <label>2</label>
    </ligand>
</feature>
<gene>
    <name evidence="1" type="primary">der</name>
    <name type="ordered locus">Minf_0176</name>
</gene>
<proteinExistence type="inferred from homology"/>
<accession>B3DXK2</accession>
<reference key="1">
    <citation type="journal article" date="2008" name="Biol. Direct">
        <title>Complete genome sequence of the extremely acidophilic methanotroph isolate V4, Methylacidiphilum infernorum, a representative of the bacterial phylum Verrucomicrobia.</title>
        <authorList>
            <person name="Hou S."/>
            <person name="Makarova K.S."/>
            <person name="Saw J.H."/>
            <person name="Senin P."/>
            <person name="Ly B.V."/>
            <person name="Zhou Z."/>
            <person name="Ren Y."/>
            <person name="Wang J."/>
            <person name="Galperin M.Y."/>
            <person name="Omelchenko M.V."/>
            <person name="Wolf Y.I."/>
            <person name="Yutin N."/>
            <person name="Koonin E.V."/>
            <person name="Stott M.B."/>
            <person name="Mountain B.W."/>
            <person name="Crowe M.A."/>
            <person name="Smirnova A.V."/>
            <person name="Dunfield P.F."/>
            <person name="Feng L."/>
            <person name="Wang L."/>
            <person name="Alam M."/>
        </authorList>
    </citation>
    <scope>NUCLEOTIDE SEQUENCE [LARGE SCALE GENOMIC DNA]</scope>
    <source>
        <strain>Isolate V4</strain>
    </source>
</reference>